<sequence length="198" mass="21298">MIEFVYPHTQLVAGVDEVGRGPLVGAVVTAAVILDPARPIVGLNDSKKLSEKRRLALYDEIKEKALSWSLGRAEPHEIDELNILHATMLAMQRAVAGLHIAPEYVLIDGNRCPALPVPSMAVVKGDSRVAEISAASIIAKVTRDAEMAALDGIFPQYGFAQHKGYPTAFHLAALAEHGATEHHRRSFAPVKRALGLAS</sequence>
<proteinExistence type="inferred from homology"/>
<comment type="function">
    <text evidence="1">Endonuclease that specifically degrades the RNA of RNA-DNA hybrids.</text>
</comment>
<comment type="catalytic activity">
    <reaction evidence="1">
        <text>Endonucleolytic cleavage to 5'-phosphomonoester.</text>
        <dbReference type="EC" id="3.1.26.4"/>
    </reaction>
</comment>
<comment type="cofactor">
    <cofactor evidence="1">
        <name>Mn(2+)</name>
        <dbReference type="ChEBI" id="CHEBI:29035"/>
    </cofactor>
    <cofactor evidence="1">
        <name>Mg(2+)</name>
        <dbReference type="ChEBI" id="CHEBI:18420"/>
    </cofactor>
    <text evidence="1">Manganese or magnesium. Binds 1 divalent metal ion per monomer in the absence of substrate. May bind a second metal ion after substrate binding.</text>
</comment>
<comment type="subcellular location">
    <subcellularLocation>
        <location evidence="1">Cytoplasm</location>
    </subcellularLocation>
</comment>
<comment type="similarity">
    <text evidence="1">Belongs to the RNase HII family.</text>
</comment>
<keyword id="KW-0963">Cytoplasm</keyword>
<keyword id="KW-0255">Endonuclease</keyword>
<keyword id="KW-0378">Hydrolase</keyword>
<keyword id="KW-0464">Manganese</keyword>
<keyword id="KW-0479">Metal-binding</keyword>
<keyword id="KW-0540">Nuclease</keyword>
<keyword id="KW-1185">Reference proteome</keyword>
<evidence type="ECO:0000255" key="1">
    <source>
        <dbReference type="HAMAP-Rule" id="MF_00052"/>
    </source>
</evidence>
<evidence type="ECO:0000255" key="2">
    <source>
        <dbReference type="PROSITE-ProRule" id="PRU01319"/>
    </source>
</evidence>
<gene>
    <name evidence="1" type="primary">rnhB</name>
    <name type="ordered locus">CKO_03183</name>
</gene>
<name>RNH2_CITK8</name>
<protein>
    <recommendedName>
        <fullName evidence="1">Ribonuclease HII</fullName>
        <shortName evidence="1">RNase HII</shortName>
        <ecNumber evidence="1">3.1.26.4</ecNumber>
    </recommendedName>
</protein>
<dbReference type="EC" id="3.1.26.4" evidence="1"/>
<dbReference type="EMBL" id="CP000822">
    <property type="protein sequence ID" value="ABV14268.1"/>
    <property type="molecule type" value="Genomic_DNA"/>
</dbReference>
<dbReference type="RefSeq" id="WP_012133974.1">
    <property type="nucleotide sequence ID" value="NC_009792.1"/>
</dbReference>
<dbReference type="SMR" id="A8ALA5"/>
<dbReference type="STRING" id="290338.CKO_03183"/>
<dbReference type="GeneID" id="45136968"/>
<dbReference type="KEGG" id="cko:CKO_03183"/>
<dbReference type="HOGENOM" id="CLU_036532_3_2_6"/>
<dbReference type="OrthoDB" id="9803420at2"/>
<dbReference type="Proteomes" id="UP000008148">
    <property type="component" value="Chromosome"/>
</dbReference>
<dbReference type="GO" id="GO:0005737">
    <property type="term" value="C:cytoplasm"/>
    <property type="evidence" value="ECO:0007669"/>
    <property type="project" value="UniProtKB-SubCell"/>
</dbReference>
<dbReference type="GO" id="GO:0032299">
    <property type="term" value="C:ribonuclease H2 complex"/>
    <property type="evidence" value="ECO:0007669"/>
    <property type="project" value="TreeGrafter"/>
</dbReference>
<dbReference type="GO" id="GO:0030145">
    <property type="term" value="F:manganese ion binding"/>
    <property type="evidence" value="ECO:0007669"/>
    <property type="project" value="UniProtKB-UniRule"/>
</dbReference>
<dbReference type="GO" id="GO:0003723">
    <property type="term" value="F:RNA binding"/>
    <property type="evidence" value="ECO:0007669"/>
    <property type="project" value="InterPro"/>
</dbReference>
<dbReference type="GO" id="GO:0004523">
    <property type="term" value="F:RNA-DNA hybrid ribonuclease activity"/>
    <property type="evidence" value="ECO:0007669"/>
    <property type="project" value="UniProtKB-UniRule"/>
</dbReference>
<dbReference type="GO" id="GO:0043137">
    <property type="term" value="P:DNA replication, removal of RNA primer"/>
    <property type="evidence" value="ECO:0007669"/>
    <property type="project" value="TreeGrafter"/>
</dbReference>
<dbReference type="GO" id="GO:0006298">
    <property type="term" value="P:mismatch repair"/>
    <property type="evidence" value="ECO:0007669"/>
    <property type="project" value="TreeGrafter"/>
</dbReference>
<dbReference type="CDD" id="cd07182">
    <property type="entry name" value="RNase_HII_bacteria_HII_like"/>
    <property type="match status" value="1"/>
</dbReference>
<dbReference type="FunFam" id="3.30.420.10:FF:000006">
    <property type="entry name" value="Ribonuclease HII"/>
    <property type="match status" value="1"/>
</dbReference>
<dbReference type="Gene3D" id="3.30.420.10">
    <property type="entry name" value="Ribonuclease H-like superfamily/Ribonuclease H"/>
    <property type="match status" value="1"/>
</dbReference>
<dbReference type="HAMAP" id="MF_00052_B">
    <property type="entry name" value="RNase_HII_B"/>
    <property type="match status" value="1"/>
</dbReference>
<dbReference type="InterPro" id="IPR022898">
    <property type="entry name" value="RNase_HII"/>
</dbReference>
<dbReference type="InterPro" id="IPR001352">
    <property type="entry name" value="RNase_HII/HIII"/>
</dbReference>
<dbReference type="InterPro" id="IPR024567">
    <property type="entry name" value="RNase_HII/HIII_dom"/>
</dbReference>
<dbReference type="InterPro" id="IPR012337">
    <property type="entry name" value="RNaseH-like_sf"/>
</dbReference>
<dbReference type="InterPro" id="IPR036397">
    <property type="entry name" value="RNaseH_sf"/>
</dbReference>
<dbReference type="NCBIfam" id="NF000594">
    <property type="entry name" value="PRK00015.1-1"/>
    <property type="match status" value="1"/>
</dbReference>
<dbReference type="NCBIfam" id="NF000595">
    <property type="entry name" value="PRK00015.1-3"/>
    <property type="match status" value="1"/>
</dbReference>
<dbReference type="NCBIfam" id="NF000596">
    <property type="entry name" value="PRK00015.1-4"/>
    <property type="match status" value="1"/>
</dbReference>
<dbReference type="PANTHER" id="PTHR10954">
    <property type="entry name" value="RIBONUCLEASE H2 SUBUNIT A"/>
    <property type="match status" value="1"/>
</dbReference>
<dbReference type="PANTHER" id="PTHR10954:SF18">
    <property type="entry name" value="RIBONUCLEASE HII"/>
    <property type="match status" value="1"/>
</dbReference>
<dbReference type="Pfam" id="PF01351">
    <property type="entry name" value="RNase_HII"/>
    <property type="match status" value="1"/>
</dbReference>
<dbReference type="SUPFAM" id="SSF53098">
    <property type="entry name" value="Ribonuclease H-like"/>
    <property type="match status" value="1"/>
</dbReference>
<dbReference type="PROSITE" id="PS51975">
    <property type="entry name" value="RNASE_H_2"/>
    <property type="match status" value="1"/>
</dbReference>
<organism>
    <name type="scientific">Citrobacter koseri (strain ATCC BAA-895 / CDC 4225-83 / SGSC4696)</name>
    <dbReference type="NCBI Taxonomy" id="290338"/>
    <lineage>
        <taxon>Bacteria</taxon>
        <taxon>Pseudomonadati</taxon>
        <taxon>Pseudomonadota</taxon>
        <taxon>Gammaproteobacteria</taxon>
        <taxon>Enterobacterales</taxon>
        <taxon>Enterobacteriaceae</taxon>
        <taxon>Citrobacter</taxon>
    </lineage>
</organism>
<reference key="1">
    <citation type="submission" date="2007-08" db="EMBL/GenBank/DDBJ databases">
        <authorList>
            <consortium name="The Citrobacter koseri Genome Sequencing Project"/>
            <person name="McClelland M."/>
            <person name="Sanderson E.K."/>
            <person name="Porwollik S."/>
            <person name="Spieth J."/>
            <person name="Clifton W.S."/>
            <person name="Latreille P."/>
            <person name="Courtney L."/>
            <person name="Wang C."/>
            <person name="Pepin K."/>
            <person name="Bhonagiri V."/>
            <person name="Nash W."/>
            <person name="Johnson M."/>
            <person name="Thiruvilangam P."/>
            <person name="Wilson R."/>
        </authorList>
    </citation>
    <scope>NUCLEOTIDE SEQUENCE [LARGE SCALE GENOMIC DNA]</scope>
    <source>
        <strain>ATCC BAA-895 / CDC 4225-83 / SGSC4696</strain>
    </source>
</reference>
<accession>A8ALA5</accession>
<feature type="chain" id="PRO_1000031134" description="Ribonuclease HII">
    <location>
        <begin position="1"/>
        <end position="198"/>
    </location>
</feature>
<feature type="domain" description="RNase H type-2" evidence="2">
    <location>
        <begin position="10"/>
        <end position="198"/>
    </location>
</feature>
<feature type="binding site" evidence="1">
    <location>
        <position position="16"/>
    </location>
    <ligand>
        <name>a divalent metal cation</name>
        <dbReference type="ChEBI" id="CHEBI:60240"/>
    </ligand>
</feature>
<feature type="binding site" evidence="1">
    <location>
        <position position="17"/>
    </location>
    <ligand>
        <name>a divalent metal cation</name>
        <dbReference type="ChEBI" id="CHEBI:60240"/>
    </ligand>
</feature>
<feature type="binding site" evidence="1">
    <location>
        <position position="108"/>
    </location>
    <ligand>
        <name>a divalent metal cation</name>
        <dbReference type="ChEBI" id="CHEBI:60240"/>
    </ligand>
</feature>